<dbReference type="EC" id="2.7.2.8" evidence="1"/>
<dbReference type="EMBL" id="CP000143">
    <property type="protein sequence ID" value="ABA80252.1"/>
    <property type="molecule type" value="Genomic_DNA"/>
</dbReference>
<dbReference type="RefSeq" id="WP_002721433.1">
    <property type="nucleotide sequence ID" value="NZ_CP030271.1"/>
</dbReference>
<dbReference type="RefSeq" id="YP_354153.1">
    <property type="nucleotide sequence ID" value="NC_007493.2"/>
</dbReference>
<dbReference type="SMR" id="Q3IYY2"/>
<dbReference type="STRING" id="272943.RSP_1068"/>
<dbReference type="EnsemblBacteria" id="ABA80252">
    <property type="protein sequence ID" value="ABA80252"/>
    <property type="gene ID" value="RSP_1068"/>
</dbReference>
<dbReference type="GeneID" id="67447842"/>
<dbReference type="KEGG" id="rsp:RSP_1068"/>
<dbReference type="PATRIC" id="fig|272943.9.peg.3042"/>
<dbReference type="eggNOG" id="COG0548">
    <property type="taxonomic scope" value="Bacteria"/>
</dbReference>
<dbReference type="OrthoDB" id="9803155at2"/>
<dbReference type="PhylomeDB" id="Q3IYY2"/>
<dbReference type="UniPathway" id="UPA00068">
    <property type="reaction ID" value="UER00107"/>
</dbReference>
<dbReference type="Proteomes" id="UP000002703">
    <property type="component" value="Chromosome 1"/>
</dbReference>
<dbReference type="GO" id="GO:0005737">
    <property type="term" value="C:cytoplasm"/>
    <property type="evidence" value="ECO:0007669"/>
    <property type="project" value="UniProtKB-SubCell"/>
</dbReference>
<dbReference type="GO" id="GO:0003991">
    <property type="term" value="F:acetylglutamate kinase activity"/>
    <property type="evidence" value="ECO:0007669"/>
    <property type="project" value="UniProtKB-UniRule"/>
</dbReference>
<dbReference type="GO" id="GO:0005524">
    <property type="term" value="F:ATP binding"/>
    <property type="evidence" value="ECO:0007669"/>
    <property type="project" value="UniProtKB-UniRule"/>
</dbReference>
<dbReference type="GO" id="GO:0042450">
    <property type="term" value="P:arginine biosynthetic process via ornithine"/>
    <property type="evidence" value="ECO:0007669"/>
    <property type="project" value="UniProtKB-UniRule"/>
</dbReference>
<dbReference type="GO" id="GO:0006526">
    <property type="term" value="P:L-arginine biosynthetic process"/>
    <property type="evidence" value="ECO:0007669"/>
    <property type="project" value="UniProtKB-UniPathway"/>
</dbReference>
<dbReference type="CDD" id="cd04250">
    <property type="entry name" value="AAK_NAGK-C"/>
    <property type="match status" value="1"/>
</dbReference>
<dbReference type="FunFam" id="3.40.1160.10:FF:000004">
    <property type="entry name" value="Acetylglutamate kinase"/>
    <property type="match status" value="1"/>
</dbReference>
<dbReference type="Gene3D" id="3.40.1160.10">
    <property type="entry name" value="Acetylglutamate kinase-like"/>
    <property type="match status" value="1"/>
</dbReference>
<dbReference type="HAMAP" id="MF_00082">
    <property type="entry name" value="ArgB"/>
    <property type="match status" value="1"/>
</dbReference>
<dbReference type="InterPro" id="IPR036393">
    <property type="entry name" value="AceGlu_kinase-like_sf"/>
</dbReference>
<dbReference type="InterPro" id="IPR004662">
    <property type="entry name" value="AcgluKinase_fam"/>
</dbReference>
<dbReference type="InterPro" id="IPR037528">
    <property type="entry name" value="ArgB"/>
</dbReference>
<dbReference type="InterPro" id="IPR001048">
    <property type="entry name" value="Asp/Glu/Uridylate_kinase"/>
</dbReference>
<dbReference type="InterPro" id="IPR001057">
    <property type="entry name" value="Glu/AcGlu_kinase"/>
</dbReference>
<dbReference type="InterPro" id="IPR041727">
    <property type="entry name" value="NAGK-C"/>
</dbReference>
<dbReference type="NCBIfam" id="TIGR00761">
    <property type="entry name" value="argB"/>
    <property type="match status" value="1"/>
</dbReference>
<dbReference type="PANTHER" id="PTHR23342">
    <property type="entry name" value="N-ACETYLGLUTAMATE SYNTHASE"/>
    <property type="match status" value="1"/>
</dbReference>
<dbReference type="PANTHER" id="PTHR23342:SF0">
    <property type="entry name" value="N-ACETYLGLUTAMATE SYNTHASE, MITOCHONDRIAL"/>
    <property type="match status" value="1"/>
</dbReference>
<dbReference type="Pfam" id="PF00696">
    <property type="entry name" value="AA_kinase"/>
    <property type="match status" value="1"/>
</dbReference>
<dbReference type="PIRSF" id="PIRSF000728">
    <property type="entry name" value="NAGK"/>
    <property type="match status" value="1"/>
</dbReference>
<dbReference type="PRINTS" id="PR00474">
    <property type="entry name" value="GLU5KINASE"/>
</dbReference>
<dbReference type="SUPFAM" id="SSF53633">
    <property type="entry name" value="Carbamate kinase-like"/>
    <property type="match status" value="1"/>
</dbReference>
<sequence length="293" mass="30731">MTRDPIATARTLSEALPYLQRYAGAVVVVKFGGNAMGDEAAMAEFARDIVLMRQVGVNPVVVHGGGPMINELLGKLGIKSEFVRGKRVTDKATVEVVEMVLSGLVNKRIVQAINDQGGRAVGISGKDDDLMVCVADDPDLGFVGKPVEMNVQVLRDLYNAGIIPVVAPVATGMADNETFNVNGDTAAGAIAGALQADRLLLLTDVAGVKDASGEVLSQLTPSQVREMVASGTISGGMIPKTETALAALDEGVRAVVILDGRTPNACLIEIFTDEGAGTIIRSTEPRVKPRVRR</sequence>
<name>ARGB_CERS4</name>
<feature type="chain" id="PRO_0000264744" description="Acetylglutamate kinase">
    <location>
        <begin position="1"/>
        <end position="293"/>
    </location>
</feature>
<feature type="binding site" evidence="1">
    <location>
        <begin position="65"/>
        <end position="66"/>
    </location>
    <ligand>
        <name>substrate</name>
    </ligand>
</feature>
<feature type="binding site" evidence="1">
    <location>
        <position position="87"/>
    </location>
    <ligand>
        <name>substrate</name>
    </ligand>
</feature>
<feature type="binding site" evidence="1">
    <location>
        <position position="180"/>
    </location>
    <ligand>
        <name>substrate</name>
    </ligand>
</feature>
<feature type="site" description="Transition state stabilizer" evidence="1">
    <location>
        <position position="30"/>
    </location>
</feature>
<feature type="site" description="Transition state stabilizer" evidence="1">
    <location>
        <position position="240"/>
    </location>
</feature>
<evidence type="ECO:0000255" key="1">
    <source>
        <dbReference type="HAMAP-Rule" id="MF_00082"/>
    </source>
</evidence>
<keyword id="KW-0028">Amino-acid biosynthesis</keyword>
<keyword id="KW-0055">Arginine biosynthesis</keyword>
<keyword id="KW-0067">ATP-binding</keyword>
<keyword id="KW-0963">Cytoplasm</keyword>
<keyword id="KW-0418">Kinase</keyword>
<keyword id="KW-0547">Nucleotide-binding</keyword>
<keyword id="KW-1185">Reference proteome</keyword>
<keyword id="KW-0808">Transferase</keyword>
<proteinExistence type="inferred from homology"/>
<comment type="function">
    <text evidence="1">Catalyzes the ATP-dependent phosphorylation of N-acetyl-L-glutamate.</text>
</comment>
<comment type="catalytic activity">
    <reaction evidence="1">
        <text>N-acetyl-L-glutamate + ATP = N-acetyl-L-glutamyl 5-phosphate + ADP</text>
        <dbReference type="Rhea" id="RHEA:14629"/>
        <dbReference type="ChEBI" id="CHEBI:30616"/>
        <dbReference type="ChEBI" id="CHEBI:44337"/>
        <dbReference type="ChEBI" id="CHEBI:57936"/>
        <dbReference type="ChEBI" id="CHEBI:456216"/>
        <dbReference type="EC" id="2.7.2.8"/>
    </reaction>
</comment>
<comment type="pathway">
    <text evidence="1">Amino-acid biosynthesis; L-arginine biosynthesis; N(2)-acetyl-L-ornithine from L-glutamate: step 2/4.</text>
</comment>
<comment type="subcellular location">
    <subcellularLocation>
        <location evidence="1">Cytoplasm</location>
    </subcellularLocation>
</comment>
<comment type="similarity">
    <text evidence="1">Belongs to the acetylglutamate kinase family. ArgB subfamily.</text>
</comment>
<accession>Q3IYY2</accession>
<organism>
    <name type="scientific">Cereibacter sphaeroides (strain ATCC 17023 / DSM 158 / JCM 6121 / CCUG 31486 / LMG 2827 / NBRC 12203 / NCIMB 8253 / ATH 2.4.1.)</name>
    <name type="common">Rhodobacter sphaeroides</name>
    <dbReference type="NCBI Taxonomy" id="272943"/>
    <lineage>
        <taxon>Bacteria</taxon>
        <taxon>Pseudomonadati</taxon>
        <taxon>Pseudomonadota</taxon>
        <taxon>Alphaproteobacteria</taxon>
        <taxon>Rhodobacterales</taxon>
        <taxon>Paracoccaceae</taxon>
        <taxon>Cereibacter</taxon>
    </lineage>
</organism>
<protein>
    <recommendedName>
        <fullName evidence="1">Acetylglutamate kinase</fullName>
        <ecNumber evidence="1">2.7.2.8</ecNumber>
    </recommendedName>
    <alternativeName>
        <fullName evidence="1">N-acetyl-L-glutamate 5-phosphotransferase</fullName>
    </alternativeName>
    <alternativeName>
        <fullName evidence="1">NAG kinase</fullName>
        <shortName evidence="1">NAGK</shortName>
    </alternativeName>
</protein>
<gene>
    <name evidence="1" type="primary">argB</name>
    <name type="ordered locus">RHOS4_26840</name>
    <name type="ordered locus">RSP_1068</name>
</gene>
<reference key="1">
    <citation type="submission" date="2005-09" db="EMBL/GenBank/DDBJ databases">
        <title>Complete sequence of chromosome 1 of Rhodobacter sphaeroides 2.4.1.</title>
        <authorList>
            <person name="Copeland A."/>
            <person name="Lucas S."/>
            <person name="Lapidus A."/>
            <person name="Barry K."/>
            <person name="Detter J.C."/>
            <person name="Glavina T."/>
            <person name="Hammon N."/>
            <person name="Israni S."/>
            <person name="Pitluck S."/>
            <person name="Richardson P."/>
            <person name="Mackenzie C."/>
            <person name="Choudhary M."/>
            <person name="Larimer F."/>
            <person name="Hauser L.J."/>
            <person name="Land M."/>
            <person name="Donohue T.J."/>
            <person name="Kaplan S."/>
        </authorList>
    </citation>
    <scope>NUCLEOTIDE SEQUENCE [LARGE SCALE GENOMIC DNA]</scope>
    <source>
        <strain>ATCC 17023 / DSM 158 / JCM 6121 / CCUG 31486 / LMG 2827 / NBRC 12203 / NCIMB 8253 / ATH 2.4.1.</strain>
    </source>
</reference>